<keyword id="KW-0025">Alternative splicing</keyword>
<keyword id="KW-0175">Coiled coil</keyword>
<keyword id="KW-1017">Isopeptide bond</keyword>
<keyword id="KW-0597">Phosphoprotein</keyword>
<keyword id="KW-1267">Proteomics identification</keyword>
<keyword id="KW-1185">Reference proteome</keyword>
<keyword id="KW-0694">RNA-binding</keyword>
<keyword id="KW-0832">Ubl conjugation</keyword>
<evidence type="ECO:0000255" key="1"/>
<evidence type="ECO:0000255" key="2">
    <source>
        <dbReference type="PROSITE-ProRule" id="PRU00180"/>
    </source>
</evidence>
<evidence type="ECO:0000256" key="3">
    <source>
        <dbReference type="SAM" id="MobiDB-lite"/>
    </source>
</evidence>
<evidence type="ECO:0000303" key="4">
    <source>
    </source>
</evidence>
<evidence type="ECO:0000303" key="5">
    <source>
    </source>
</evidence>
<evidence type="ECO:0000305" key="6"/>
<evidence type="ECO:0007744" key="7">
    <source>
    </source>
</evidence>
<evidence type="ECO:0007744" key="8">
    <source>
    </source>
</evidence>
<evidence type="ECO:0007744" key="9">
    <source>
    </source>
</evidence>
<evidence type="ECO:0007744" key="10">
    <source>
    </source>
</evidence>
<evidence type="ECO:0007744" key="11">
    <source>
    </source>
</evidence>
<evidence type="ECO:0007744" key="12">
    <source>
    </source>
</evidence>
<gene>
    <name type="primary">SRBD1</name>
</gene>
<sequence length="995" mass="111776">MSSLPRRAKVQVQDVVLKDEFSSFSELSSASEEDDKEDSAWEPQKKVPRSRKQPPPKESKPKRMPRVKKNAPQISDGSEVVVVKEELNSSVAIADTALEDRKNKLDTVQTLKTAKTKQKCAAQPHTVRRTKKLKVEEETSKASNLEGESNSSETPSTSTVWGGTCKKEENDDDFTFGQSALKKIKTETYPQGQPVKFPANANSTKEEVEMNWDMVQVLSERTNIEPWVCANIIRLFNDDNTIPFIIRYRKELINNLDADSLREVQQTLEELRAVAKKVHSTIQKIKKEGKMSECLLKAMLNCKTFEELEHVSAPYKTGSKGTKAQRARQLGLEGAARALLEKPGELSLLSYIRPDVKGLSTLQDIEIGVQHILADMIAKDKDTLDFIRNLCQKRHVCIQSSLAKVSSKKVNEKDVDKFLLYQHFSCNIRNIHHHQILAINRGENLKVLTVKVNISDGVKDEFCRWCIQNRWRPRSFARPELMKILYNSLNDSFKRLIYPLLCREFRAKLTSDAEKESVMMFGRNLRQLLLTSPVPGRTLMGVDPGYKHGCKLAIISPTSQILHTDVVYLHCGQGFREAEKIKTLLLNFNCSTVVIGNGTACRETEAYFADLIMKNYFAPLDVVYCIVSEAGASIYSVSPEANKEMPGLDPNLRSAVSIARRVQDPLAELVKIEPKHIGVGMYQHDVSQTLLKATLDSVVEECVSFVGVDINICSEVLLRHIAGLNANRAKNIIEWREKNGPFINREQLKKVKGLGPKSFQQCAGFIRINQDYIRTFCSQQTETSGQIQGVAVTSSADVEVTNEKQGKKKSKTAVNVLLKPNPLDQTCIHPESYDIAMRFLSSIGGTLYEVGKPEMQQKINSFLEKEGMEKIAERLQTTVHTLQVIIDGLSQPESFDFRTDFDKPDFKRSIVCLEDLQIGTVLTGKVENATLFGIFVDIGVGKSGLIPIRNVTEAKLSKTKKRRSLGLGPGERVEVQVLNIDIPRSRITLDLIRVL</sequence>
<dbReference type="EMBL" id="AK001241">
    <property type="protein sequence ID" value="BAA91577.1"/>
    <property type="molecule type" value="mRNA"/>
</dbReference>
<dbReference type="EMBL" id="AK056536">
    <property type="status" value="NOT_ANNOTATED_CDS"/>
    <property type="molecule type" value="mRNA"/>
</dbReference>
<dbReference type="EMBL" id="AC012072">
    <property type="protein sequence ID" value="AAY14821.1"/>
    <property type="status" value="ALT_SEQ"/>
    <property type="molecule type" value="Genomic_DNA"/>
</dbReference>
<dbReference type="EMBL" id="AC008179">
    <property type="protein sequence ID" value="AAK52078.1"/>
    <property type="molecule type" value="Genomic_DNA"/>
</dbReference>
<dbReference type="EMBL" id="BC032538">
    <property type="protein sequence ID" value="AAH32538.1"/>
    <property type="molecule type" value="mRNA"/>
</dbReference>
<dbReference type="CCDS" id="CCDS1823.1">
    <molecule id="Q8N5C6-1"/>
</dbReference>
<dbReference type="RefSeq" id="NP_060549.4">
    <molecule id="Q8N5C6-1"/>
    <property type="nucleotide sequence ID" value="NM_018079.4"/>
</dbReference>
<dbReference type="SMR" id="Q8N5C6"/>
<dbReference type="BioGRID" id="120439">
    <property type="interactions" value="138"/>
</dbReference>
<dbReference type="FunCoup" id="Q8N5C6">
    <property type="interactions" value="1274"/>
</dbReference>
<dbReference type="IntAct" id="Q8N5C6">
    <property type="interactions" value="73"/>
</dbReference>
<dbReference type="MINT" id="Q8N5C6"/>
<dbReference type="STRING" id="9606.ENSP00000263736"/>
<dbReference type="GlyGen" id="Q8N5C6">
    <property type="glycosylation" value="5 sites, 1 O-linked glycan (5 sites)"/>
</dbReference>
<dbReference type="iPTMnet" id="Q8N5C6"/>
<dbReference type="PhosphoSitePlus" id="Q8N5C6"/>
<dbReference type="SwissPalm" id="Q8N5C6"/>
<dbReference type="BioMuta" id="SRBD1"/>
<dbReference type="DMDM" id="145566960"/>
<dbReference type="jPOST" id="Q8N5C6"/>
<dbReference type="MassIVE" id="Q8N5C6"/>
<dbReference type="PaxDb" id="9606-ENSP00000263736"/>
<dbReference type="PeptideAtlas" id="Q8N5C6"/>
<dbReference type="ProteomicsDB" id="72030">
    <molecule id="Q8N5C6-1"/>
</dbReference>
<dbReference type="ProteomicsDB" id="72031">
    <molecule id="Q8N5C6-2"/>
</dbReference>
<dbReference type="Pumba" id="Q8N5C6"/>
<dbReference type="Antibodypedia" id="29937">
    <property type="antibodies" value="123 antibodies from 24 providers"/>
</dbReference>
<dbReference type="DNASU" id="55133"/>
<dbReference type="Ensembl" id="ENST00000263736.5">
    <molecule id="Q8N5C6-1"/>
    <property type="protein sequence ID" value="ENSP00000263736.4"/>
    <property type="gene ID" value="ENSG00000068784.13"/>
</dbReference>
<dbReference type="GeneID" id="55133"/>
<dbReference type="KEGG" id="hsa:55133"/>
<dbReference type="MANE-Select" id="ENST00000263736.5">
    <property type="protein sequence ID" value="ENSP00000263736.4"/>
    <property type="RefSeq nucleotide sequence ID" value="NM_018079.5"/>
    <property type="RefSeq protein sequence ID" value="NP_060549.4"/>
</dbReference>
<dbReference type="UCSC" id="uc002rus.4">
    <molecule id="Q8N5C6-1"/>
    <property type="organism name" value="human"/>
</dbReference>
<dbReference type="AGR" id="HGNC:25521"/>
<dbReference type="CTD" id="55133"/>
<dbReference type="DisGeNET" id="55133"/>
<dbReference type="GeneCards" id="SRBD1"/>
<dbReference type="HGNC" id="HGNC:25521">
    <property type="gene designation" value="SRBD1"/>
</dbReference>
<dbReference type="HPA" id="ENSG00000068784">
    <property type="expression patterns" value="Low tissue specificity"/>
</dbReference>
<dbReference type="neXtProt" id="NX_Q8N5C6"/>
<dbReference type="OpenTargets" id="ENSG00000068784"/>
<dbReference type="PharmGKB" id="PA144596269"/>
<dbReference type="VEuPathDB" id="HostDB:ENSG00000068784"/>
<dbReference type="eggNOG" id="KOG1857">
    <property type="taxonomic scope" value="Eukaryota"/>
</dbReference>
<dbReference type="GeneTree" id="ENSGT00510000047850"/>
<dbReference type="HOGENOM" id="CLU_009833_1_0_1"/>
<dbReference type="InParanoid" id="Q8N5C6"/>
<dbReference type="OMA" id="RWAWRTR"/>
<dbReference type="OrthoDB" id="995477at2759"/>
<dbReference type="PAN-GO" id="Q8N5C6">
    <property type="GO annotations" value="3 GO annotations based on evolutionary models"/>
</dbReference>
<dbReference type="PhylomeDB" id="Q8N5C6"/>
<dbReference type="TreeFam" id="TF313600"/>
<dbReference type="PathwayCommons" id="Q8N5C6"/>
<dbReference type="SignaLink" id="Q8N5C6"/>
<dbReference type="BioGRID-ORCS" id="55133">
    <property type="hits" value="776 hits in 1167 CRISPR screens"/>
</dbReference>
<dbReference type="ChiTaRS" id="SRBD1">
    <property type="organism name" value="human"/>
</dbReference>
<dbReference type="GenomeRNAi" id="55133"/>
<dbReference type="Pharos" id="Q8N5C6">
    <property type="development level" value="Tbio"/>
</dbReference>
<dbReference type="PRO" id="PR:Q8N5C6"/>
<dbReference type="Proteomes" id="UP000005640">
    <property type="component" value="Chromosome 2"/>
</dbReference>
<dbReference type="RNAct" id="Q8N5C6">
    <property type="molecule type" value="protein"/>
</dbReference>
<dbReference type="Bgee" id="ENSG00000068784">
    <property type="expression patterns" value="Expressed in male germ line stem cell (sensu Vertebrata) in testis and 135 other cell types or tissues"/>
</dbReference>
<dbReference type="GO" id="GO:0003729">
    <property type="term" value="F:mRNA binding"/>
    <property type="evidence" value="ECO:0000318"/>
    <property type="project" value="GO_Central"/>
</dbReference>
<dbReference type="GO" id="GO:0003735">
    <property type="term" value="F:structural constituent of ribosome"/>
    <property type="evidence" value="ECO:0000318"/>
    <property type="project" value="GO_Central"/>
</dbReference>
<dbReference type="GO" id="GO:0006139">
    <property type="term" value="P:nucleobase-containing compound metabolic process"/>
    <property type="evidence" value="ECO:0007669"/>
    <property type="project" value="InterPro"/>
</dbReference>
<dbReference type="GO" id="GO:0006412">
    <property type="term" value="P:translation"/>
    <property type="evidence" value="ECO:0000318"/>
    <property type="project" value="GO_Central"/>
</dbReference>
<dbReference type="CDD" id="cd05685">
    <property type="entry name" value="S1_Tex"/>
    <property type="match status" value="1"/>
</dbReference>
<dbReference type="FunFam" id="3.30.420.140:FF:000001">
    <property type="entry name" value="RNA-binding transcriptional accessory protein"/>
    <property type="match status" value="1"/>
</dbReference>
<dbReference type="FunFam" id="1.10.10.650:FF:000001">
    <property type="entry name" value="S1 RNA-binding domain 1"/>
    <property type="match status" value="1"/>
</dbReference>
<dbReference type="FunFam" id="1.10.3500.10:FF:000003">
    <property type="entry name" value="S1 RNA-binding domain-containing protein 1"/>
    <property type="match status" value="1"/>
</dbReference>
<dbReference type="FunFam" id="2.40.50.140:FF:000146">
    <property type="entry name" value="S1 RNA-binding domain-containing protein 1"/>
    <property type="match status" value="1"/>
</dbReference>
<dbReference type="Gene3D" id="2.40.50.140">
    <property type="entry name" value="Nucleic acid-binding proteins"/>
    <property type="match status" value="1"/>
</dbReference>
<dbReference type="Gene3D" id="1.10.10.650">
    <property type="entry name" value="RuvA domain 2-like"/>
    <property type="match status" value="1"/>
</dbReference>
<dbReference type="Gene3D" id="1.10.3500.10">
    <property type="entry name" value="Tex N-terminal region-like"/>
    <property type="match status" value="1"/>
</dbReference>
<dbReference type="Gene3D" id="1.10.150.310">
    <property type="entry name" value="Tex RuvX-like domain-like"/>
    <property type="match status" value="1"/>
</dbReference>
<dbReference type="Gene3D" id="3.30.420.140">
    <property type="entry name" value="YqgF/RNase H-like domain"/>
    <property type="match status" value="1"/>
</dbReference>
<dbReference type="InterPro" id="IPR041692">
    <property type="entry name" value="HHH_9"/>
</dbReference>
<dbReference type="InterPro" id="IPR012340">
    <property type="entry name" value="NA-bd_OB-fold"/>
</dbReference>
<dbReference type="InterPro" id="IPR050437">
    <property type="entry name" value="Ribos_protein_bS1-like"/>
</dbReference>
<dbReference type="InterPro" id="IPR012337">
    <property type="entry name" value="RNaseH-like_sf"/>
</dbReference>
<dbReference type="InterPro" id="IPR010994">
    <property type="entry name" value="RuvA_2-like"/>
</dbReference>
<dbReference type="InterPro" id="IPR003029">
    <property type="entry name" value="S1_domain"/>
</dbReference>
<dbReference type="InterPro" id="IPR044146">
    <property type="entry name" value="S1_Tex"/>
</dbReference>
<dbReference type="InterPro" id="IPR055179">
    <property type="entry name" value="Tex-like_central_region"/>
</dbReference>
<dbReference type="InterPro" id="IPR023323">
    <property type="entry name" value="Tex-like_dom_sf"/>
</dbReference>
<dbReference type="InterPro" id="IPR023319">
    <property type="entry name" value="Tex-like_HTH_dom_sf"/>
</dbReference>
<dbReference type="InterPro" id="IPR018974">
    <property type="entry name" value="Tex-like_N"/>
</dbReference>
<dbReference type="InterPro" id="IPR032639">
    <property type="entry name" value="Tex_YqgF"/>
</dbReference>
<dbReference type="InterPro" id="IPR006641">
    <property type="entry name" value="YqgF/RNaseH-like_dom"/>
</dbReference>
<dbReference type="InterPro" id="IPR037027">
    <property type="entry name" value="YqgF/RNaseH-like_dom_sf"/>
</dbReference>
<dbReference type="PANTHER" id="PTHR10724">
    <property type="entry name" value="30S RIBOSOMAL PROTEIN S1"/>
    <property type="match status" value="1"/>
</dbReference>
<dbReference type="PANTHER" id="PTHR10724:SF10">
    <property type="entry name" value="S1 RNA-BINDING DOMAIN-CONTAINING PROTEIN 1"/>
    <property type="match status" value="1"/>
</dbReference>
<dbReference type="Pfam" id="PF12836">
    <property type="entry name" value="HHH_3"/>
    <property type="match status" value="1"/>
</dbReference>
<dbReference type="Pfam" id="PF17674">
    <property type="entry name" value="HHH_9"/>
    <property type="match status" value="1"/>
</dbReference>
<dbReference type="Pfam" id="PF00575">
    <property type="entry name" value="S1"/>
    <property type="match status" value="1"/>
</dbReference>
<dbReference type="Pfam" id="PF22706">
    <property type="entry name" value="Tex_central_region"/>
    <property type="match status" value="1"/>
</dbReference>
<dbReference type="Pfam" id="PF09371">
    <property type="entry name" value="Tex_N"/>
    <property type="match status" value="1"/>
</dbReference>
<dbReference type="Pfam" id="PF16921">
    <property type="entry name" value="Tex_YqgF"/>
    <property type="match status" value="1"/>
</dbReference>
<dbReference type="SMART" id="SM00316">
    <property type="entry name" value="S1"/>
    <property type="match status" value="1"/>
</dbReference>
<dbReference type="SMART" id="SM00732">
    <property type="entry name" value="YqgFc"/>
    <property type="match status" value="1"/>
</dbReference>
<dbReference type="SUPFAM" id="SSF50249">
    <property type="entry name" value="Nucleic acid-binding proteins"/>
    <property type="match status" value="1"/>
</dbReference>
<dbReference type="SUPFAM" id="SSF53098">
    <property type="entry name" value="Ribonuclease H-like"/>
    <property type="match status" value="1"/>
</dbReference>
<dbReference type="SUPFAM" id="SSF47781">
    <property type="entry name" value="RuvA domain 2-like"/>
    <property type="match status" value="2"/>
</dbReference>
<dbReference type="SUPFAM" id="SSF158832">
    <property type="entry name" value="Tex N-terminal region-like"/>
    <property type="match status" value="1"/>
</dbReference>
<dbReference type="PROSITE" id="PS50126">
    <property type="entry name" value="S1"/>
    <property type="match status" value="1"/>
</dbReference>
<feature type="chain" id="PRO_0000284357" description="S1 RNA-binding domain-containing protein 1">
    <location>
        <begin position="1"/>
        <end position="995"/>
    </location>
</feature>
<feature type="domain" description="S1 motif" evidence="2">
    <location>
        <begin position="919"/>
        <end position="992"/>
    </location>
</feature>
<feature type="region of interest" description="Disordered" evidence="3">
    <location>
        <begin position="23"/>
        <end position="81"/>
    </location>
</feature>
<feature type="region of interest" description="Disordered" evidence="3">
    <location>
        <begin position="120"/>
        <end position="165"/>
    </location>
</feature>
<feature type="coiled-coil region" evidence="1">
    <location>
        <begin position="258"/>
        <end position="288"/>
    </location>
</feature>
<feature type="compositionally biased region" description="Low complexity" evidence="3">
    <location>
        <begin position="146"/>
        <end position="159"/>
    </location>
</feature>
<feature type="modified residue" description="Phosphoserine" evidence="8">
    <location>
        <position position="861"/>
    </location>
</feature>
<feature type="modified residue" description="Phosphoserine" evidence="7 8">
    <location>
        <position position="964"/>
    </location>
</feature>
<feature type="cross-link" description="Glycyl lysine isopeptide (Lys-Gly) (interchain with G-Cter in SUMO2)" evidence="12">
    <location>
        <position position="84"/>
    </location>
</feature>
<feature type="cross-link" description="Glycyl lysine isopeptide (Lys-Gly) (interchain with G-Cter in SUMO2)" evidence="10 11 12">
    <location>
        <position position="134"/>
    </location>
</feature>
<feature type="cross-link" description="Glycyl lysine isopeptide (Lys-Gly) (interchain with G-Cter in SUMO2)" evidence="12">
    <location>
        <position position="166"/>
    </location>
</feature>
<feature type="cross-link" description="Glycyl lysine isopeptide (Lys-Gly) (interchain with G-Cter in SUMO2)" evidence="12">
    <location>
        <position position="167"/>
    </location>
</feature>
<feature type="cross-link" description="Glycyl lysine isopeptide (Lys-Gly) (interchain with G-Cter in SUMO2)" evidence="12">
    <location>
        <position position="183"/>
    </location>
</feature>
<feature type="cross-link" description="Glycyl lysine isopeptide (Lys-Gly) (interchain with G-Cter in SUMO1); alternate" evidence="9">
    <location>
        <position position="185"/>
    </location>
</feature>
<feature type="cross-link" description="Glycyl lysine isopeptide (Lys-Gly) (interchain with G-Cter in SUMO2); alternate" evidence="10 11 12">
    <location>
        <position position="185"/>
    </location>
</feature>
<feature type="cross-link" description="Glycyl lysine isopeptide (Lys-Gly) (interchain with G-Cter in SUMO2)" evidence="10">
    <location>
        <position position="955"/>
    </location>
</feature>
<feature type="splice variant" id="VSP_024461" description="In isoform 2." evidence="4 5">
    <location>
        <begin position="1"/>
        <end position="375"/>
    </location>
</feature>
<feature type="sequence variant" id="VAR_056995" description="In dbSNP:rs6544834.">
    <original>T</original>
    <variation>M</variation>
    <location>
        <position position="361"/>
    </location>
</feature>
<feature type="sequence variant" id="VAR_056996" description="In dbSNP:rs3755073.">
    <original>V</original>
    <variation>F</variation>
    <location>
        <position position="798"/>
    </location>
</feature>
<feature type="sequence variant" id="VAR_056997" description="In dbSNP:rs3755072.">
    <original>K</original>
    <variation>R</variation>
    <location>
        <position position="811"/>
    </location>
</feature>
<feature type="sequence conflict" description="In Ref. 1; BAA91577." evidence="6" ref="1">
    <original>N</original>
    <variation>S</variation>
    <location>
        <position position="597"/>
    </location>
</feature>
<feature type="sequence conflict" description="In Ref. 1; AK056536." evidence="6" ref="1">
    <original>S</original>
    <variation>G</variation>
    <location>
        <position position="638"/>
    </location>
</feature>
<feature type="sequence conflict" description="In Ref. 1; BAA91577." evidence="6" ref="1">
    <original>S</original>
    <variation>P</variation>
    <location>
        <position position="795"/>
    </location>
</feature>
<name>SRBD1_HUMAN</name>
<comment type="alternative products">
    <event type="alternative splicing"/>
    <isoform>
        <id>Q8N5C6-1</id>
        <name>1</name>
        <sequence type="displayed"/>
    </isoform>
    <isoform>
        <id>Q8N5C6-2</id>
        <name>2</name>
        <sequence type="described" ref="VSP_024461"/>
    </isoform>
</comment>
<comment type="sequence caution" evidence="6">
    <conflict type="erroneous gene model prediction">
        <sequence resource="EMBL-CDS" id="AAY14821"/>
    </conflict>
</comment>
<protein>
    <recommendedName>
        <fullName>S1 RNA-binding domain-containing protein 1</fullName>
    </recommendedName>
</protein>
<proteinExistence type="evidence at protein level"/>
<reference key="1">
    <citation type="journal article" date="2004" name="Nat. Genet.">
        <title>Complete sequencing and characterization of 21,243 full-length human cDNAs.</title>
        <authorList>
            <person name="Ota T."/>
            <person name="Suzuki Y."/>
            <person name="Nishikawa T."/>
            <person name="Otsuki T."/>
            <person name="Sugiyama T."/>
            <person name="Irie R."/>
            <person name="Wakamatsu A."/>
            <person name="Hayashi K."/>
            <person name="Sato H."/>
            <person name="Nagai K."/>
            <person name="Kimura K."/>
            <person name="Makita H."/>
            <person name="Sekine M."/>
            <person name="Obayashi M."/>
            <person name="Nishi T."/>
            <person name="Shibahara T."/>
            <person name="Tanaka T."/>
            <person name="Ishii S."/>
            <person name="Yamamoto J."/>
            <person name="Saito K."/>
            <person name="Kawai Y."/>
            <person name="Isono Y."/>
            <person name="Nakamura Y."/>
            <person name="Nagahari K."/>
            <person name="Murakami K."/>
            <person name="Yasuda T."/>
            <person name="Iwayanagi T."/>
            <person name="Wagatsuma M."/>
            <person name="Shiratori A."/>
            <person name="Sudo H."/>
            <person name="Hosoiri T."/>
            <person name="Kaku Y."/>
            <person name="Kodaira H."/>
            <person name="Kondo H."/>
            <person name="Sugawara M."/>
            <person name="Takahashi M."/>
            <person name="Kanda K."/>
            <person name="Yokoi T."/>
            <person name="Furuya T."/>
            <person name="Kikkawa E."/>
            <person name="Omura Y."/>
            <person name="Abe K."/>
            <person name="Kamihara K."/>
            <person name="Katsuta N."/>
            <person name="Sato K."/>
            <person name="Tanikawa M."/>
            <person name="Yamazaki M."/>
            <person name="Ninomiya K."/>
            <person name="Ishibashi T."/>
            <person name="Yamashita H."/>
            <person name="Murakawa K."/>
            <person name="Fujimori K."/>
            <person name="Tanai H."/>
            <person name="Kimata M."/>
            <person name="Watanabe M."/>
            <person name="Hiraoka S."/>
            <person name="Chiba Y."/>
            <person name="Ishida S."/>
            <person name="Ono Y."/>
            <person name="Takiguchi S."/>
            <person name="Watanabe S."/>
            <person name="Yosida M."/>
            <person name="Hotuta T."/>
            <person name="Kusano J."/>
            <person name="Kanehori K."/>
            <person name="Takahashi-Fujii A."/>
            <person name="Hara H."/>
            <person name="Tanase T.-O."/>
            <person name="Nomura Y."/>
            <person name="Togiya S."/>
            <person name="Komai F."/>
            <person name="Hara R."/>
            <person name="Takeuchi K."/>
            <person name="Arita M."/>
            <person name="Imose N."/>
            <person name="Musashino K."/>
            <person name="Yuuki H."/>
            <person name="Oshima A."/>
            <person name="Sasaki N."/>
            <person name="Aotsuka S."/>
            <person name="Yoshikawa Y."/>
            <person name="Matsunawa H."/>
            <person name="Ichihara T."/>
            <person name="Shiohata N."/>
            <person name="Sano S."/>
            <person name="Moriya S."/>
            <person name="Momiyama H."/>
            <person name="Satoh N."/>
            <person name="Takami S."/>
            <person name="Terashima Y."/>
            <person name="Suzuki O."/>
            <person name="Nakagawa S."/>
            <person name="Senoh A."/>
            <person name="Mizoguchi H."/>
            <person name="Goto Y."/>
            <person name="Shimizu F."/>
            <person name="Wakebe H."/>
            <person name="Hishigaki H."/>
            <person name="Watanabe T."/>
            <person name="Sugiyama A."/>
            <person name="Takemoto M."/>
            <person name="Kawakami B."/>
            <person name="Yamazaki M."/>
            <person name="Watanabe K."/>
            <person name="Kumagai A."/>
            <person name="Itakura S."/>
            <person name="Fukuzumi Y."/>
            <person name="Fujimori Y."/>
            <person name="Komiyama M."/>
            <person name="Tashiro H."/>
            <person name="Tanigami A."/>
            <person name="Fujiwara T."/>
            <person name="Ono T."/>
            <person name="Yamada K."/>
            <person name="Fujii Y."/>
            <person name="Ozaki K."/>
            <person name="Hirao M."/>
            <person name="Ohmori Y."/>
            <person name="Kawabata A."/>
            <person name="Hikiji T."/>
            <person name="Kobatake N."/>
            <person name="Inagaki H."/>
            <person name="Ikema Y."/>
            <person name="Okamoto S."/>
            <person name="Okitani R."/>
            <person name="Kawakami T."/>
            <person name="Noguchi S."/>
            <person name="Itoh T."/>
            <person name="Shigeta K."/>
            <person name="Senba T."/>
            <person name="Matsumura K."/>
            <person name="Nakajima Y."/>
            <person name="Mizuno T."/>
            <person name="Morinaga M."/>
            <person name="Sasaki M."/>
            <person name="Togashi T."/>
            <person name="Oyama M."/>
            <person name="Hata H."/>
            <person name="Watanabe M."/>
            <person name="Komatsu T."/>
            <person name="Mizushima-Sugano J."/>
            <person name="Satoh T."/>
            <person name="Shirai Y."/>
            <person name="Takahashi Y."/>
            <person name="Nakagawa K."/>
            <person name="Okumura K."/>
            <person name="Nagase T."/>
            <person name="Nomura N."/>
            <person name="Kikuchi H."/>
            <person name="Masuho Y."/>
            <person name="Yamashita R."/>
            <person name="Nakai K."/>
            <person name="Yada T."/>
            <person name="Nakamura Y."/>
            <person name="Ohara O."/>
            <person name="Isogai T."/>
            <person name="Sugano S."/>
        </authorList>
    </citation>
    <scope>NUCLEOTIDE SEQUENCE [LARGE SCALE MRNA] (ISOFORMS 1 AND 2)</scope>
    <source>
        <tissue>Teratocarcinoma</tissue>
    </source>
</reference>
<reference key="2">
    <citation type="journal article" date="2005" name="Nature">
        <title>Generation and annotation of the DNA sequences of human chromosomes 2 and 4.</title>
        <authorList>
            <person name="Hillier L.W."/>
            <person name="Graves T.A."/>
            <person name="Fulton R.S."/>
            <person name="Fulton L.A."/>
            <person name="Pepin K.H."/>
            <person name="Minx P."/>
            <person name="Wagner-McPherson C."/>
            <person name="Layman D."/>
            <person name="Wylie K."/>
            <person name="Sekhon M."/>
            <person name="Becker M.C."/>
            <person name="Fewell G.A."/>
            <person name="Delehaunty K.D."/>
            <person name="Miner T.L."/>
            <person name="Nash W.E."/>
            <person name="Kremitzki C."/>
            <person name="Oddy L."/>
            <person name="Du H."/>
            <person name="Sun H."/>
            <person name="Bradshaw-Cordum H."/>
            <person name="Ali J."/>
            <person name="Carter J."/>
            <person name="Cordes M."/>
            <person name="Harris A."/>
            <person name="Isak A."/>
            <person name="van Brunt A."/>
            <person name="Nguyen C."/>
            <person name="Du F."/>
            <person name="Courtney L."/>
            <person name="Kalicki J."/>
            <person name="Ozersky P."/>
            <person name="Abbott S."/>
            <person name="Armstrong J."/>
            <person name="Belter E.A."/>
            <person name="Caruso L."/>
            <person name="Cedroni M."/>
            <person name="Cotton M."/>
            <person name="Davidson T."/>
            <person name="Desai A."/>
            <person name="Elliott G."/>
            <person name="Erb T."/>
            <person name="Fronick C."/>
            <person name="Gaige T."/>
            <person name="Haakenson W."/>
            <person name="Haglund K."/>
            <person name="Holmes A."/>
            <person name="Harkins R."/>
            <person name="Kim K."/>
            <person name="Kruchowski S.S."/>
            <person name="Strong C.M."/>
            <person name="Grewal N."/>
            <person name="Goyea E."/>
            <person name="Hou S."/>
            <person name="Levy A."/>
            <person name="Martinka S."/>
            <person name="Mead K."/>
            <person name="McLellan M.D."/>
            <person name="Meyer R."/>
            <person name="Randall-Maher J."/>
            <person name="Tomlinson C."/>
            <person name="Dauphin-Kohlberg S."/>
            <person name="Kozlowicz-Reilly A."/>
            <person name="Shah N."/>
            <person name="Swearengen-Shahid S."/>
            <person name="Snider J."/>
            <person name="Strong J.T."/>
            <person name="Thompson J."/>
            <person name="Yoakum M."/>
            <person name="Leonard S."/>
            <person name="Pearman C."/>
            <person name="Trani L."/>
            <person name="Radionenko M."/>
            <person name="Waligorski J.E."/>
            <person name="Wang C."/>
            <person name="Rock S.M."/>
            <person name="Tin-Wollam A.-M."/>
            <person name="Maupin R."/>
            <person name="Latreille P."/>
            <person name="Wendl M.C."/>
            <person name="Yang S.-P."/>
            <person name="Pohl C."/>
            <person name="Wallis J.W."/>
            <person name="Spieth J."/>
            <person name="Bieri T.A."/>
            <person name="Berkowicz N."/>
            <person name="Nelson J.O."/>
            <person name="Osborne J."/>
            <person name="Ding L."/>
            <person name="Meyer R."/>
            <person name="Sabo A."/>
            <person name="Shotland Y."/>
            <person name="Sinha P."/>
            <person name="Wohldmann P.E."/>
            <person name="Cook L.L."/>
            <person name="Hickenbotham M.T."/>
            <person name="Eldred J."/>
            <person name="Williams D."/>
            <person name="Jones T.A."/>
            <person name="She X."/>
            <person name="Ciccarelli F.D."/>
            <person name="Izaurralde E."/>
            <person name="Taylor J."/>
            <person name="Schmutz J."/>
            <person name="Myers R.M."/>
            <person name="Cox D.R."/>
            <person name="Huang X."/>
            <person name="McPherson J.D."/>
            <person name="Mardis E.R."/>
            <person name="Clifton S.W."/>
            <person name="Warren W.C."/>
            <person name="Chinwalla A.T."/>
            <person name="Eddy S.R."/>
            <person name="Marra M.A."/>
            <person name="Ovcharenko I."/>
            <person name="Furey T.S."/>
            <person name="Miller W."/>
            <person name="Eichler E.E."/>
            <person name="Bork P."/>
            <person name="Suyama M."/>
            <person name="Torrents D."/>
            <person name="Waterston R.H."/>
            <person name="Wilson R.K."/>
        </authorList>
    </citation>
    <scope>NUCLEOTIDE SEQUENCE [LARGE SCALE GENOMIC DNA]</scope>
</reference>
<reference key="3">
    <citation type="journal article" date="2004" name="Genome Res.">
        <title>The status, quality, and expansion of the NIH full-length cDNA project: the Mammalian Gene Collection (MGC).</title>
        <authorList>
            <consortium name="The MGC Project Team"/>
        </authorList>
    </citation>
    <scope>NUCLEOTIDE SEQUENCE [LARGE SCALE MRNA] (ISOFORM 2)</scope>
    <source>
        <tissue>Skin</tissue>
    </source>
</reference>
<reference key="4">
    <citation type="journal article" date="2008" name="Proc. Natl. Acad. Sci. U.S.A.">
        <title>A quantitative atlas of mitotic phosphorylation.</title>
        <authorList>
            <person name="Dephoure N."/>
            <person name="Zhou C."/>
            <person name="Villen J."/>
            <person name="Beausoleil S.A."/>
            <person name="Bakalarski C.E."/>
            <person name="Elledge S.J."/>
            <person name="Gygi S.P."/>
        </authorList>
    </citation>
    <scope>IDENTIFICATION BY MASS SPECTROMETRY [LARGE SCALE ANALYSIS]</scope>
    <source>
        <tissue>Cervix carcinoma</tissue>
    </source>
</reference>
<reference key="5">
    <citation type="journal article" date="2010" name="Sci. Signal.">
        <title>Quantitative phosphoproteomics reveals widespread full phosphorylation site occupancy during mitosis.</title>
        <authorList>
            <person name="Olsen J.V."/>
            <person name="Vermeulen M."/>
            <person name="Santamaria A."/>
            <person name="Kumar C."/>
            <person name="Miller M.L."/>
            <person name="Jensen L.J."/>
            <person name="Gnad F."/>
            <person name="Cox J."/>
            <person name="Jensen T.S."/>
            <person name="Nigg E.A."/>
            <person name="Brunak S."/>
            <person name="Mann M."/>
        </authorList>
    </citation>
    <scope>PHOSPHORYLATION [LARGE SCALE ANALYSIS] AT SER-964</scope>
    <scope>IDENTIFICATION BY MASS SPECTROMETRY [LARGE SCALE ANALYSIS]</scope>
    <source>
        <tissue>Cervix carcinoma</tissue>
    </source>
</reference>
<reference key="6">
    <citation type="journal article" date="2011" name="BMC Syst. Biol.">
        <title>Initial characterization of the human central proteome.</title>
        <authorList>
            <person name="Burkard T.R."/>
            <person name="Planyavsky M."/>
            <person name="Kaupe I."/>
            <person name="Breitwieser F.P."/>
            <person name="Buerckstuemmer T."/>
            <person name="Bennett K.L."/>
            <person name="Superti-Furga G."/>
            <person name="Colinge J."/>
        </authorList>
    </citation>
    <scope>IDENTIFICATION BY MASS SPECTROMETRY [LARGE SCALE ANALYSIS]</scope>
</reference>
<reference key="7">
    <citation type="journal article" date="2013" name="J. Proteome Res.">
        <title>Toward a comprehensive characterization of a human cancer cell phosphoproteome.</title>
        <authorList>
            <person name="Zhou H."/>
            <person name="Di Palma S."/>
            <person name="Preisinger C."/>
            <person name="Peng M."/>
            <person name="Polat A.N."/>
            <person name="Heck A.J."/>
            <person name="Mohammed S."/>
        </authorList>
    </citation>
    <scope>PHOSPHORYLATION [LARGE SCALE ANALYSIS] AT SER-861 AND SER-964</scope>
    <scope>IDENTIFICATION BY MASS SPECTROMETRY [LARGE SCALE ANALYSIS]</scope>
    <source>
        <tissue>Cervix carcinoma</tissue>
        <tissue>Erythroleukemia</tissue>
    </source>
</reference>
<reference key="8">
    <citation type="journal article" date="2014" name="Nat. Struct. Mol. Biol.">
        <title>Uncovering global SUMOylation signaling networks in a site-specific manner.</title>
        <authorList>
            <person name="Hendriks I.A."/>
            <person name="D'Souza R.C."/>
            <person name="Yang B."/>
            <person name="Verlaan-de Vries M."/>
            <person name="Mann M."/>
            <person name="Vertegaal A.C."/>
        </authorList>
    </citation>
    <scope>SUMOYLATION [LARGE SCALE ANALYSIS] AT LYS-134; LYS-185 AND LYS-955</scope>
    <scope>IDENTIFICATION BY MASS SPECTROMETRY [LARGE SCALE ANALYSIS]</scope>
</reference>
<reference key="9">
    <citation type="journal article" date="2014" name="Proc. Natl. Acad. Sci. U.S.A.">
        <title>Mapping of SUMO sites and analysis of SUMOylation changes induced by external stimuli.</title>
        <authorList>
            <person name="Impens F."/>
            <person name="Radoshevich L."/>
            <person name="Cossart P."/>
            <person name="Ribet D."/>
        </authorList>
    </citation>
    <scope>SUMOYLATION [LARGE SCALE ANALYSIS] AT LYS-185</scope>
    <scope>IDENTIFICATION BY MASS SPECTROMETRY [LARGE SCALE ANALYSIS]</scope>
</reference>
<reference key="10">
    <citation type="journal article" date="2015" name="Cell Rep.">
        <title>SUMO-2 orchestrates chromatin modifiers in response to DNA damage.</title>
        <authorList>
            <person name="Hendriks I.A."/>
            <person name="Treffers L.W."/>
            <person name="Verlaan-de Vries M."/>
            <person name="Olsen J.V."/>
            <person name="Vertegaal A.C."/>
        </authorList>
    </citation>
    <scope>SUMOYLATION [LARGE SCALE ANALYSIS] AT LYS-134 AND LYS-185</scope>
    <scope>IDENTIFICATION BY MASS SPECTROMETRY [LARGE SCALE ANALYSIS]</scope>
</reference>
<reference key="11">
    <citation type="journal article" date="2017" name="Nat. Struct. Mol. Biol.">
        <title>Site-specific mapping of the human SUMO proteome reveals co-modification with phosphorylation.</title>
        <authorList>
            <person name="Hendriks I.A."/>
            <person name="Lyon D."/>
            <person name="Young C."/>
            <person name="Jensen L.J."/>
            <person name="Vertegaal A.C."/>
            <person name="Nielsen M.L."/>
        </authorList>
    </citation>
    <scope>SUMOYLATION [LARGE SCALE ANALYSIS] AT LYS-84; LYS-134; LYS-166; LYS-167; LYS-183 AND LYS-185</scope>
    <scope>IDENTIFICATION BY MASS SPECTROMETRY [LARGE SCALE ANALYSIS]</scope>
</reference>
<accession>Q8N5C6</accession>
<accession>Q53T56</accession>
<accession>Q96TA4</accession>
<accession>Q9NW11</accession>
<organism>
    <name type="scientific">Homo sapiens</name>
    <name type="common">Human</name>
    <dbReference type="NCBI Taxonomy" id="9606"/>
    <lineage>
        <taxon>Eukaryota</taxon>
        <taxon>Metazoa</taxon>
        <taxon>Chordata</taxon>
        <taxon>Craniata</taxon>
        <taxon>Vertebrata</taxon>
        <taxon>Euteleostomi</taxon>
        <taxon>Mammalia</taxon>
        <taxon>Eutheria</taxon>
        <taxon>Euarchontoglires</taxon>
        <taxon>Primates</taxon>
        <taxon>Haplorrhini</taxon>
        <taxon>Catarrhini</taxon>
        <taxon>Hominidae</taxon>
        <taxon>Homo</taxon>
    </lineage>
</organism>